<gene>
    <name evidence="1" type="primary">aroB</name>
    <name type="ordered locus">CKL_0786</name>
</gene>
<feature type="chain" id="PRO_1000094491" description="3-dehydroquinate synthase">
    <location>
        <begin position="1"/>
        <end position="359"/>
    </location>
</feature>
<feature type="binding site" evidence="1">
    <location>
        <begin position="106"/>
        <end position="110"/>
    </location>
    <ligand>
        <name>NAD(+)</name>
        <dbReference type="ChEBI" id="CHEBI:57540"/>
    </ligand>
</feature>
<feature type="binding site" evidence="1">
    <location>
        <begin position="130"/>
        <end position="131"/>
    </location>
    <ligand>
        <name>NAD(+)</name>
        <dbReference type="ChEBI" id="CHEBI:57540"/>
    </ligand>
</feature>
<feature type="binding site" evidence="1">
    <location>
        <position position="143"/>
    </location>
    <ligand>
        <name>NAD(+)</name>
        <dbReference type="ChEBI" id="CHEBI:57540"/>
    </ligand>
</feature>
<feature type="binding site" evidence="1">
    <location>
        <position position="152"/>
    </location>
    <ligand>
        <name>NAD(+)</name>
        <dbReference type="ChEBI" id="CHEBI:57540"/>
    </ligand>
</feature>
<feature type="binding site" evidence="1">
    <location>
        <position position="185"/>
    </location>
    <ligand>
        <name>Zn(2+)</name>
        <dbReference type="ChEBI" id="CHEBI:29105"/>
    </ligand>
</feature>
<feature type="binding site" evidence="1">
    <location>
        <position position="246"/>
    </location>
    <ligand>
        <name>Zn(2+)</name>
        <dbReference type="ChEBI" id="CHEBI:29105"/>
    </ligand>
</feature>
<feature type="binding site" evidence="1">
    <location>
        <position position="263"/>
    </location>
    <ligand>
        <name>Zn(2+)</name>
        <dbReference type="ChEBI" id="CHEBI:29105"/>
    </ligand>
</feature>
<keyword id="KW-0028">Amino-acid biosynthesis</keyword>
<keyword id="KW-0057">Aromatic amino acid biosynthesis</keyword>
<keyword id="KW-0170">Cobalt</keyword>
<keyword id="KW-0963">Cytoplasm</keyword>
<keyword id="KW-0456">Lyase</keyword>
<keyword id="KW-0479">Metal-binding</keyword>
<keyword id="KW-0520">NAD</keyword>
<keyword id="KW-0547">Nucleotide-binding</keyword>
<keyword id="KW-1185">Reference proteome</keyword>
<keyword id="KW-0862">Zinc</keyword>
<protein>
    <recommendedName>
        <fullName evidence="1">3-dehydroquinate synthase</fullName>
        <shortName evidence="1">DHQS</shortName>
        <ecNumber evidence="1">4.2.3.4</ecNumber>
    </recommendedName>
</protein>
<name>AROB_CLOK5</name>
<proteinExistence type="inferred from homology"/>
<dbReference type="EC" id="4.2.3.4" evidence="1"/>
<dbReference type="EMBL" id="CP000673">
    <property type="protein sequence ID" value="EDK32839.1"/>
    <property type="molecule type" value="Genomic_DNA"/>
</dbReference>
<dbReference type="RefSeq" id="WP_011989354.1">
    <property type="nucleotide sequence ID" value="NC_009706.1"/>
</dbReference>
<dbReference type="SMR" id="A5N6A8"/>
<dbReference type="STRING" id="431943.CKL_0786"/>
<dbReference type="KEGG" id="ckl:CKL_0786"/>
<dbReference type="eggNOG" id="COG0337">
    <property type="taxonomic scope" value="Bacteria"/>
</dbReference>
<dbReference type="HOGENOM" id="CLU_001201_0_1_9"/>
<dbReference type="UniPathway" id="UPA00053">
    <property type="reaction ID" value="UER00085"/>
</dbReference>
<dbReference type="Proteomes" id="UP000002411">
    <property type="component" value="Chromosome"/>
</dbReference>
<dbReference type="GO" id="GO:0005737">
    <property type="term" value="C:cytoplasm"/>
    <property type="evidence" value="ECO:0007669"/>
    <property type="project" value="UniProtKB-SubCell"/>
</dbReference>
<dbReference type="GO" id="GO:0003856">
    <property type="term" value="F:3-dehydroquinate synthase activity"/>
    <property type="evidence" value="ECO:0007669"/>
    <property type="project" value="UniProtKB-UniRule"/>
</dbReference>
<dbReference type="GO" id="GO:0046872">
    <property type="term" value="F:metal ion binding"/>
    <property type="evidence" value="ECO:0007669"/>
    <property type="project" value="UniProtKB-KW"/>
</dbReference>
<dbReference type="GO" id="GO:0000166">
    <property type="term" value="F:nucleotide binding"/>
    <property type="evidence" value="ECO:0007669"/>
    <property type="project" value="UniProtKB-KW"/>
</dbReference>
<dbReference type="GO" id="GO:0008652">
    <property type="term" value="P:amino acid biosynthetic process"/>
    <property type="evidence" value="ECO:0007669"/>
    <property type="project" value="UniProtKB-KW"/>
</dbReference>
<dbReference type="GO" id="GO:0009073">
    <property type="term" value="P:aromatic amino acid family biosynthetic process"/>
    <property type="evidence" value="ECO:0007669"/>
    <property type="project" value="UniProtKB-KW"/>
</dbReference>
<dbReference type="GO" id="GO:0009423">
    <property type="term" value="P:chorismate biosynthetic process"/>
    <property type="evidence" value="ECO:0007669"/>
    <property type="project" value="UniProtKB-UniRule"/>
</dbReference>
<dbReference type="CDD" id="cd08195">
    <property type="entry name" value="DHQS"/>
    <property type="match status" value="1"/>
</dbReference>
<dbReference type="FunFam" id="3.40.50.1970:FF:000007">
    <property type="entry name" value="Pentafunctional AROM polypeptide"/>
    <property type="match status" value="1"/>
</dbReference>
<dbReference type="Gene3D" id="3.40.50.1970">
    <property type="match status" value="1"/>
</dbReference>
<dbReference type="Gene3D" id="1.20.1090.10">
    <property type="entry name" value="Dehydroquinate synthase-like - alpha domain"/>
    <property type="match status" value="1"/>
</dbReference>
<dbReference type="HAMAP" id="MF_00110">
    <property type="entry name" value="DHQ_synthase"/>
    <property type="match status" value="1"/>
</dbReference>
<dbReference type="InterPro" id="IPR050071">
    <property type="entry name" value="Dehydroquinate_synthase"/>
</dbReference>
<dbReference type="InterPro" id="IPR016037">
    <property type="entry name" value="DHQ_synth_AroB"/>
</dbReference>
<dbReference type="InterPro" id="IPR030963">
    <property type="entry name" value="DHQ_synth_fam"/>
</dbReference>
<dbReference type="InterPro" id="IPR030960">
    <property type="entry name" value="DHQS/DOIS_N"/>
</dbReference>
<dbReference type="InterPro" id="IPR056179">
    <property type="entry name" value="DHQS_C"/>
</dbReference>
<dbReference type="NCBIfam" id="TIGR01357">
    <property type="entry name" value="aroB"/>
    <property type="match status" value="1"/>
</dbReference>
<dbReference type="PANTHER" id="PTHR43622">
    <property type="entry name" value="3-DEHYDROQUINATE SYNTHASE"/>
    <property type="match status" value="1"/>
</dbReference>
<dbReference type="PANTHER" id="PTHR43622:SF7">
    <property type="entry name" value="3-DEHYDROQUINATE SYNTHASE, CHLOROPLASTIC"/>
    <property type="match status" value="1"/>
</dbReference>
<dbReference type="Pfam" id="PF01761">
    <property type="entry name" value="DHQ_synthase"/>
    <property type="match status" value="1"/>
</dbReference>
<dbReference type="Pfam" id="PF24621">
    <property type="entry name" value="DHQS_C"/>
    <property type="match status" value="1"/>
</dbReference>
<dbReference type="PIRSF" id="PIRSF001455">
    <property type="entry name" value="DHQ_synth"/>
    <property type="match status" value="1"/>
</dbReference>
<dbReference type="SUPFAM" id="SSF56796">
    <property type="entry name" value="Dehydroquinate synthase-like"/>
    <property type="match status" value="1"/>
</dbReference>
<comment type="function">
    <text evidence="1">Catalyzes the conversion of 3-deoxy-D-arabino-heptulosonate 7-phosphate (DAHP) to dehydroquinate (DHQ).</text>
</comment>
<comment type="catalytic activity">
    <reaction evidence="1">
        <text>7-phospho-2-dehydro-3-deoxy-D-arabino-heptonate = 3-dehydroquinate + phosphate</text>
        <dbReference type="Rhea" id="RHEA:21968"/>
        <dbReference type="ChEBI" id="CHEBI:32364"/>
        <dbReference type="ChEBI" id="CHEBI:43474"/>
        <dbReference type="ChEBI" id="CHEBI:58394"/>
        <dbReference type="EC" id="4.2.3.4"/>
    </reaction>
</comment>
<comment type="cofactor">
    <cofactor evidence="1">
        <name>Co(2+)</name>
        <dbReference type="ChEBI" id="CHEBI:48828"/>
    </cofactor>
    <cofactor evidence="1">
        <name>Zn(2+)</name>
        <dbReference type="ChEBI" id="CHEBI:29105"/>
    </cofactor>
    <text evidence="1">Binds 1 divalent metal cation per subunit. Can use either Co(2+) or Zn(2+).</text>
</comment>
<comment type="cofactor">
    <cofactor evidence="1">
        <name>NAD(+)</name>
        <dbReference type="ChEBI" id="CHEBI:57540"/>
    </cofactor>
</comment>
<comment type="pathway">
    <text evidence="1">Metabolic intermediate biosynthesis; chorismate biosynthesis; chorismate from D-erythrose 4-phosphate and phosphoenolpyruvate: step 2/7.</text>
</comment>
<comment type="subcellular location">
    <subcellularLocation>
        <location evidence="1">Cytoplasm</location>
    </subcellularLocation>
</comment>
<comment type="similarity">
    <text evidence="1">Belongs to the sugar phosphate cyclases superfamily. Dehydroquinate synthase family.</text>
</comment>
<organism>
    <name type="scientific">Clostridium kluyveri (strain ATCC 8527 / DSM 555 / NBRC 12016 / NCIMB 10680 / K1)</name>
    <dbReference type="NCBI Taxonomy" id="431943"/>
    <lineage>
        <taxon>Bacteria</taxon>
        <taxon>Bacillati</taxon>
        <taxon>Bacillota</taxon>
        <taxon>Clostridia</taxon>
        <taxon>Eubacteriales</taxon>
        <taxon>Clostridiaceae</taxon>
        <taxon>Clostridium</taxon>
    </lineage>
</organism>
<reference key="1">
    <citation type="journal article" date="2008" name="Proc. Natl. Acad. Sci. U.S.A.">
        <title>The genome of Clostridium kluyveri, a strict anaerobe with unique metabolic features.</title>
        <authorList>
            <person name="Seedorf H."/>
            <person name="Fricke W.F."/>
            <person name="Veith B."/>
            <person name="Brueggemann H."/>
            <person name="Liesegang H."/>
            <person name="Strittmatter A."/>
            <person name="Miethke M."/>
            <person name="Buckel W."/>
            <person name="Hinderberger J."/>
            <person name="Li F."/>
            <person name="Hagemeier C."/>
            <person name="Thauer R.K."/>
            <person name="Gottschalk G."/>
        </authorList>
    </citation>
    <scope>NUCLEOTIDE SEQUENCE [LARGE SCALE GENOMIC DNA]</scope>
    <source>
        <strain>ATCC 8527 / DSM 555 / NBRC 12016 / NCIMB 10680 / K1</strain>
    </source>
</reference>
<sequence length="359" mass="40459">MKAIDINVKEKSYKISIKKGILSSIGERLKTTYQSRNIVVITDTNVEKFYMETLKNSLLESGFTMKIISIEPGEKSKNLATLERVYEKLCEFQIRRKDIIISLGGGVVGDLSGFAASTYLRGINYIQVPTSLLAQVDSSIGGKVAVDLPWGKNLVGSFYHPDAVFIDPDVLLSLNDKFFSDGMGEVIKYGFIKDKSILNLLDSCKDKDEVLQYIEDIIYKCCSIKKHLVEKDERDLGERMMLNFGHTLAHGIEKYYNYGKYSHGEAVAIGMTYMTNITERMDITKKGTHDYMKGILTKYGLPVNMPDMDKQALVNSIALDKKSSGDRINIIVIEEAGICKIMKIKLREVYGFLFPEDII</sequence>
<evidence type="ECO:0000255" key="1">
    <source>
        <dbReference type="HAMAP-Rule" id="MF_00110"/>
    </source>
</evidence>
<accession>A5N6A8</accession>